<organism>
    <name type="scientific">Xanthomonas campestris pv. campestris (strain B100)</name>
    <dbReference type="NCBI Taxonomy" id="509169"/>
    <lineage>
        <taxon>Bacteria</taxon>
        <taxon>Pseudomonadati</taxon>
        <taxon>Pseudomonadota</taxon>
        <taxon>Gammaproteobacteria</taxon>
        <taxon>Lysobacterales</taxon>
        <taxon>Lysobacteraceae</taxon>
        <taxon>Xanthomonas</taxon>
    </lineage>
</organism>
<feature type="chain" id="PRO_1000121032" description="Large ribosomal subunit protein uL10">
    <location>
        <begin position="1"/>
        <end position="177"/>
    </location>
</feature>
<protein>
    <recommendedName>
        <fullName evidence="1">Large ribosomal subunit protein uL10</fullName>
    </recommendedName>
    <alternativeName>
        <fullName evidence="2">50S ribosomal protein L10</fullName>
    </alternativeName>
</protein>
<dbReference type="EMBL" id="AM920689">
    <property type="protein sequence ID" value="CAP52833.1"/>
    <property type="molecule type" value="Genomic_DNA"/>
</dbReference>
<dbReference type="SMR" id="B0RU91"/>
<dbReference type="KEGG" id="xca:xcc-b100_3468"/>
<dbReference type="HOGENOM" id="CLU_092227_0_1_6"/>
<dbReference type="Proteomes" id="UP000001188">
    <property type="component" value="Chromosome"/>
</dbReference>
<dbReference type="GO" id="GO:0015934">
    <property type="term" value="C:large ribosomal subunit"/>
    <property type="evidence" value="ECO:0007669"/>
    <property type="project" value="InterPro"/>
</dbReference>
<dbReference type="GO" id="GO:0070180">
    <property type="term" value="F:large ribosomal subunit rRNA binding"/>
    <property type="evidence" value="ECO:0007669"/>
    <property type="project" value="UniProtKB-UniRule"/>
</dbReference>
<dbReference type="GO" id="GO:0003735">
    <property type="term" value="F:structural constituent of ribosome"/>
    <property type="evidence" value="ECO:0007669"/>
    <property type="project" value="InterPro"/>
</dbReference>
<dbReference type="GO" id="GO:0006412">
    <property type="term" value="P:translation"/>
    <property type="evidence" value="ECO:0007669"/>
    <property type="project" value="UniProtKB-UniRule"/>
</dbReference>
<dbReference type="CDD" id="cd05797">
    <property type="entry name" value="Ribosomal_L10"/>
    <property type="match status" value="1"/>
</dbReference>
<dbReference type="FunFam" id="3.30.70.1730:FF:000001">
    <property type="entry name" value="50S ribosomal protein L10"/>
    <property type="match status" value="1"/>
</dbReference>
<dbReference type="Gene3D" id="3.30.70.1730">
    <property type="match status" value="1"/>
</dbReference>
<dbReference type="HAMAP" id="MF_00362">
    <property type="entry name" value="Ribosomal_uL10"/>
    <property type="match status" value="1"/>
</dbReference>
<dbReference type="InterPro" id="IPR001790">
    <property type="entry name" value="Ribosomal_uL10"/>
</dbReference>
<dbReference type="InterPro" id="IPR043141">
    <property type="entry name" value="Ribosomal_uL10-like_sf"/>
</dbReference>
<dbReference type="InterPro" id="IPR022973">
    <property type="entry name" value="Ribosomal_uL10_bac"/>
</dbReference>
<dbReference type="InterPro" id="IPR047865">
    <property type="entry name" value="Ribosomal_uL10_bac_type"/>
</dbReference>
<dbReference type="InterPro" id="IPR002363">
    <property type="entry name" value="Ribosomal_uL10_CS_bac"/>
</dbReference>
<dbReference type="NCBIfam" id="NF000955">
    <property type="entry name" value="PRK00099.1-1"/>
    <property type="match status" value="1"/>
</dbReference>
<dbReference type="PANTHER" id="PTHR11560">
    <property type="entry name" value="39S RIBOSOMAL PROTEIN L10, MITOCHONDRIAL"/>
    <property type="match status" value="1"/>
</dbReference>
<dbReference type="Pfam" id="PF00466">
    <property type="entry name" value="Ribosomal_L10"/>
    <property type="match status" value="1"/>
</dbReference>
<dbReference type="SUPFAM" id="SSF160369">
    <property type="entry name" value="Ribosomal protein L10-like"/>
    <property type="match status" value="1"/>
</dbReference>
<dbReference type="PROSITE" id="PS01109">
    <property type="entry name" value="RIBOSOMAL_L10"/>
    <property type="match status" value="1"/>
</dbReference>
<keyword id="KW-0687">Ribonucleoprotein</keyword>
<keyword id="KW-0689">Ribosomal protein</keyword>
<keyword id="KW-0694">RNA-binding</keyword>
<keyword id="KW-0699">rRNA-binding</keyword>
<comment type="function">
    <text evidence="1">Forms part of the ribosomal stalk, playing a central role in the interaction of the ribosome with GTP-bound translation factors.</text>
</comment>
<comment type="subunit">
    <text evidence="1">Part of the ribosomal stalk of the 50S ribosomal subunit. The N-terminus interacts with L11 and the large rRNA to form the base of the stalk. The C-terminus forms an elongated spine to which L12 dimers bind in a sequential fashion forming a multimeric L10(L12)X complex.</text>
</comment>
<comment type="similarity">
    <text evidence="1">Belongs to the universal ribosomal protein uL10 family.</text>
</comment>
<name>RL10_XANCB</name>
<evidence type="ECO:0000255" key="1">
    <source>
        <dbReference type="HAMAP-Rule" id="MF_00362"/>
    </source>
</evidence>
<evidence type="ECO:0000305" key="2"/>
<reference key="1">
    <citation type="journal article" date="2008" name="J. Biotechnol.">
        <title>The genome of Xanthomonas campestris pv. campestris B100 and its use for the reconstruction of metabolic pathways involved in xanthan biosynthesis.</title>
        <authorList>
            <person name="Vorhoelter F.-J."/>
            <person name="Schneiker S."/>
            <person name="Goesmann A."/>
            <person name="Krause L."/>
            <person name="Bekel T."/>
            <person name="Kaiser O."/>
            <person name="Linke B."/>
            <person name="Patschkowski T."/>
            <person name="Rueckert C."/>
            <person name="Schmid J."/>
            <person name="Sidhu V.K."/>
            <person name="Sieber V."/>
            <person name="Tauch A."/>
            <person name="Watt S.A."/>
            <person name="Weisshaar B."/>
            <person name="Becker A."/>
            <person name="Niehaus K."/>
            <person name="Puehler A."/>
        </authorList>
    </citation>
    <scope>NUCLEOTIDE SEQUENCE [LARGE SCALE GENOMIC DNA]</scope>
    <source>
        <strain>B100</strain>
    </source>
</reference>
<proteinExistence type="inferred from homology"/>
<sequence length="177" mass="18348">MALNLSQKQEVVAELADIAAKAHSLIAAEYAGITVSQMTAMRKQARETGVFLKVVKNTLAVRAVEGTDFAVAADKLVGPLLYAFSMEEPGAAGRLIKEFAKGNDKLQAKVVSIGGELFPASHVDVLASLPTLDQALAMLARVLSEPAAMFARAVKAVGDKQGGGDEAAAPVAETAEA</sequence>
<gene>
    <name evidence="1" type="primary">rplJ</name>
    <name type="ordered locus">xcc-b100_3468</name>
</gene>
<accession>B0RU91</accession>